<keyword id="KW-1003">Cell membrane</keyword>
<keyword id="KW-0472">Membrane</keyword>
<keyword id="KW-1185">Reference proteome</keyword>
<keyword id="KW-0812">Transmembrane</keyword>
<keyword id="KW-1133">Transmembrane helix</keyword>
<comment type="subcellular location">
    <subcellularLocation>
        <location evidence="2">Cell membrane</location>
        <topology evidence="2">Multi-pass membrane protein</topology>
    </subcellularLocation>
</comment>
<organism>
    <name type="scientific">Mycobacterium bovis (strain ATCC BAA-935 / AF2122/97)</name>
    <dbReference type="NCBI Taxonomy" id="233413"/>
    <lineage>
        <taxon>Bacteria</taxon>
        <taxon>Bacillati</taxon>
        <taxon>Actinomycetota</taxon>
        <taxon>Actinomycetes</taxon>
        <taxon>Mycobacteriales</taxon>
        <taxon>Mycobacteriaceae</taxon>
        <taxon>Mycobacterium</taxon>
        <taxon>Mycobacterium tuberculosis complex</taxon>
    </lineage>
</organism>
<name>Y3437_MYCBO</name>
<accession>P65072</accession>
<accession>A0A1R3Y5S6</accession>
<accession>Q50722</accession>
<accession>X2BNL8</accession>
<sequence>MLAFPYLMTMITPPTFDVAFIGSGAACSMTLLEMADALLSSPSASPKLRIAVVERDEQFWCGIPYGQRSSIGSLAIQKLDDFADEPEKAAYRIWLEQNKQRWLAFFQAEGGAAAARWICDNRDALDGNQWGELYLPRFLFGVFLSEQMIAAIAALGERDLAEIVTIRAEAMSAHSADGHYRIGLRPSGNGPTAIAAGKVVVAIGSPPTKAILASDSEPAFTYINDFYSPGGESNVARLRDSLDRVESWEKRNVLVVGSNATSLEALYLMRHDARIRARVRSITVISRSGVLPYMICNQPPEFDFPRLRTLLCTEAIAAADLMSAIRDDLATAEERSLNLADLYDAVAALFGQALHKMDLVQQEEFFCVHGMNFTKLVRRAGRDCRQASEELAADGTLSLLAGEVLRVDACASGQPFATMTYRAAGAEHTHPVPFAAVVNCGGFEELDTCSSPFLVSAMQNGLCRPNRTNRGLLVNDDFEASPGFCVIGPLVGGNFTPKIRFWHVESAPRVRSLAKSLAASLLASLQPVALAPC</sequence>
<reference key="1">
    <citation type="journal article" date="2003" name="Proc. Natl. Acad. Sci. U.S.A.">
        <title>The complete genome sequence of Mycobacterium bovis.</title>
        <authorList>
            <person name="Garnier T."/>
            <person name="Eiglmeier K."/>
            <person name="Camus J.-C."/>
            <person name="Medina N."/>
            <person name="Mansoor H."/>
            <person name="Pryor M."/>
            <person name="Duthoy S."/>
            <person name="Grondin S."/>
            <person name="Lacroix C."/>
            <person name="Monsempe C."/>
            <person name="Simon S."/>
            <person name="Harris B."/>
            <person name="Atkin R."/>
            <person name="Doggett J."/>
            <person name="Mayes R."/>
            <person name="Keating L."/>
            <person name="Wheeler P.R."/>
            <person name="Parkhill J."/>
            <person name="Barrell B.G."/>
            <person name="Cole S.T."/>
            <person name="Gordon S.V."/>
            <person name="Hewinson R.G."/>
        </authorList>
    </citation>
    <scope>NUCLEOTIDE SEQUENCE [LARGE SCALE GENOMIC DNA]</scope>
    <source>
        <strain>ATCC BAA-935 / AF2122/97</strain>
    </source>
</reference>
<reference key="2">
    <citation type="journal article" date="2017" name="Genome Announc.">
        <title>Updated reference genome sequence and annotation of Mycobacterium bovis AF2122/97.</title>
        <authorList>
            <person name="Malone K.M."/>
            <person name="Farrell D."/>
            <person name="Stuber T.P."/>
            <person name="Schubert O.T."/>
            <person name="Aebersold R."/>
            <person name="Robbe-Austerman S."/>
            <person name="Gordon S.V."/>
        </authorList>
    </citation>
    <scope>NUCLEOTIDE SEQUENCE [LARGE SCALE GENOMIC DNA]</scope>
    <scope>GENOME REANNOTATION</scope>
    <source>
        <strain>ATCC BAA-935 / AF2122/97</strain>
    </source>
</reference>
<proteinExistence type="predicted"/>
<gene>
    <name type="ordered locus">BQ2027_MB3437C</name>
</gene>
<feature type="chain" id="PRO_0000104124" description="Uncharacterized protein Mb3437c">
    <location>
        <begin position="1"/>
        <end position="533"/>
    </location>
</feature>
<feature type="transmembrane region" description="Helical" evidence="1">
    <location>
        <begin position="1"/>
        <end position="21"/>
    </location>
</feature>
<feature type="transmembrane region" description="Helical" evidence="1">
    <location>
        <begin position="135"/>
        <end position="155"/>
    </location>
</feature>
<feature type="transmembrane region" description="Helical" evidence="1">
    <location>
        <begin position="193"/>
        <end position="213"/>
    </location>
</feature>
<feature type="transmembrane region" description="Helical" evidence="1">
    <location>
        <begin position="472"/>
        <end position="492"/>
    </location>
</feature>
<protein>
    <recommendedName>
        <fullName>Uncharacterized protein Mb3437c</fullName>
    </recommendedName>
</protein>
<evidence type="ECO:0000255" key="1"/>
<evidence type="ECO:0000305" key="2"/>
<dbReference type="EMBL" id="LT708304">
    <property type="protein sequence ID" value="SIU02065.1"/>
    <property type="molecule type" value="Genomic_DNA"/>
</dbReference>
<dbReference type="RefSeq" id="NP_857077.1">
    <property type="nucleotide sequence ID" value="NC_002945.3"/>
</dbReference>
<dbReference type="RefSeq" id="WP_003417969.1">
    <property type="nucleotide sequence ID" value="NC_002945.4"/>
</dbReference>
<dbReference type="SMR" id="P65072"/>
<dbReference type="KEGG" id="mbo:BQ2027_MB3437C"/>
<dbReference type="PATRIC" id="fig|233413.5.peg.3772"/>
<dbReference type="Proteomes" id="UP000001419">
    <property type="component" value="Chromosome"/>
</dbReference>
<dbReference type="GO" id="GO:0005886">
    <property type="term" value="C:plasma membrane"/>
    <property type="evidence" value="ECO:0007669"/>
    <property type="project" value="UniProtKB-SubCell"/>
</dbReference>
<dbReference type="InterPro" id="IPR036188">
    <property type="entry name" value="FAD/NAD-bd_sf"/>
</dbReference>
<dbReference type="InterPro" id="IPR038732">
    <property type="entry name" value="HpyO/CreE_NAD-binding"/>
</dbReference>
<dbReference type="InterPro" id="IPR052189">
    <property type="entry name" value="L-asp_N-monooxygenase_NS-form"/>
</dbReference>
<dbReference type="PANTHER" id="PTHR40254">
    <property type="entry name" value="BLR0577 PROTEIN"/>
    <property type="match status" value="1"/>
</dbReference>
<dbReference type="PANTHER" id="PTHR40254:SF1">
    <property type="entry name" value="BLR0577 PROTEIN"/>
    <property type="match status" value="1"/>
</dbReference>
<dbReference type="Pfam" id="PF13454">
    <property type="entry name" value="NAD_binding_9"/>
    <property type="match status" value="1"/>
</dbReference>
<dbReference type="SUPFAM" id="SSF51905">
    <property type="entry name" value="FAD/NAD(P)-binding domain"/>
    <property type="match status" value="1"/>
</dbReference>